<keyword id="KW-0007">Acetylation</keyword>
<keyword id="KW-1017">Isopeptide bond</keyword>
<keyword id="KW-0488">Methylation</keyword>
<keyword id="KW-0539">Nucleus</keyword>
<keyword id="KW-0597">Phosphoprotein</keyword>
<keyword id="KW-1185">Reference proteome</keyword>
<keyword id="KW-0677">Repeat</keyword>
<keyword id="KW-0687">Ribonucleoprotein</keyword>
<keyword id="KW-0694">RNA-binding</keyword>
<keyword id="KW-0832">Ubl conjugation</keyword>
<gene>
    <name type="primary">Hnrnph2</name>
    <name type="synonym">Hnrph2</name>
</gene>
<feature type="chain" id="PRO_0000434386" description="Heterogeneous nuclear ribonucleoprotein H2">
    <location>
        <begin position="1"/>
        <end position="449"/>
    </location>
</feature>
<feature type="initiator methionine" description="Removed; alternate" evidence="2">
    <location>
        <position position="1"/>
    </location>
</feature>
<feature type="chain" id="PRO_0000081860" description="Heterogeneous nuclear ribonucleoprotein H2, N-terminally processed">
    <location>
        <begin position="2"/>
        <end position="449"/>
    </location>
</feature>
<feature type="domain" description="RRM 1" evidence="4">
    <location>
        <begin position="11"/>
        <end position="90"/>
    </location>
</feature>
<feature type="domain" description="RRM 2" evidence="4">
    <location>
        <begin position="111"/>
        <end position="188"/>
    </location>
</feature>
<feature type="repeat" description="1-1">
    <location>
        <begin position="234"/>
        <end position="249"/>
    </location>
</feature>
<feature type="domain" description="RRM 3" evidence="4">
    <location>
        <begin position="289"/>
        <end position="364"/>
    </location>
</feature>
<feature type="repeat" description="2-1">
    <location>
        <begin position="354"/>
        <end position="372"/>
    </location>
</feature>
<feature type="repeat" description="2-2">
    <location>
        <begin position="374"/>
        <end position="392"/>
    </location>
</feature>
<feature type="repeat" description="1-2">
    <location>
        <begin position="418"/>
        <end position="433"/>
    </location>
</feature>
<feature type="region of interest" description="2 X 16 AA Gly-rich approximate repeats">
    <location>
        <begin position="234"/>
        <end position="433"/>
    </location>
</feature>
<feature type="region of interest" description="2 X 19 AA perfect repeats">
    <location>
        <begin position="354"/>
        <end position="392"/>
    </location>
</feature>
<feature type="modified residue" description="N-acetylmethionine" evidence="2">
    <location>
        <position position="1"/>
    </location>
</feature>
<feature type="modified residue" description="N-acetylmethionine; in Heterogeneous nuclear ribonucleoprotein H2, N-terminally processed" evidence="2">
    <location>
        <position position="2"/>
    </location>
</feature>
<feature type="modified residue" description="Phosphoserine" evidence="2">
    <location>
        <position position="23"/>
    </location>
</feature>
<feature type="modified residue" description="Phosphoserine" evidence="2">
    <location>
        <position position="54"/>
    </location>
</feature>
<feature type="modified residue" description="Phosphoserine" evidence="2">
    <location>
        <position position="63"/>
    </location>
</feature>
<feature type="modified residue" description="Phosphoserine" evidence="5">
    <location>
        <position position="90"/>
    </location>
</feature>
<feature type="modified residue" description="Dimethylated arginine; alternate" evidence="2">
    <location>
        <position position="233"/>
    </location>
</feature>
<feature type="modified residue" description="Omega-N-methylarginine; alternate" evidence="6">
    <location>
        <position position="233"/>
    </location>
</feature>
<feature type="modified residue" description="Phosphotyrosine" evidence="2">
    <location>
        <position position="246"/>
    </location>
</feature>
<feature type="modified residue" description="Phosphoserine" evidence="5">
    <location>
        <position position="310"/>
    </location>
</feature>
<feature type="cross-link" description="Glycyl lysine isopeptide (Lys-Gly) (interchain with G-Cter in SUMO2)" evidence="3">
    <location>
        <position position="35"/>
    </location>
</feature>
<feature type="cross-link" description="Glycyl lysine isopeptide (Lys-Gly) (interchain with G-Cter in SUMO2)" evidence="2">
    <location>
        <position position="87"/>
    </location>
</feature>
<feature type="cross-link" description="Glycyl lysine isopeptide (Lys-Gly) (interchain with G-Cter in SUMO2)" evidence="2">
    <location>
        <position position="98"/>
    </location>
</feature>
<protein>
    <recommendedName>
        <fullName>Heterogeneous nuclear ribonucleoprotein H2</fullName>
        <shortName>hnRNP H2</shortName>
    </recommendedName>
    <alternativeName>
        <fullName>Heterogeneous nuclear ribonucleoprotein H'</fullName>
        <shortName>hnRNP H'</shortName>
    </alternativeName>
    <component>
        <recommendedName>
            <fullName>Heterogeneous nuclear ribonucleoprotein H2, N-terminally processed</fullName>
        </recommendedName>
    </component>
</protein>
<organism>
    <name type="scientific">Mus musculus</name>
    <name type="common">Mouse</name>
    <dbReference type="NCBI Taxonomy" id="10090"/>
    <lineage>
        <taxon>Eukaryota</taxon>
        <taxon>Metazoa</taxon>
        <taxon>Chordata</taxon>
        <taxon>Craniata</taxon>
        <taxon>Vertebrata</taxon>
        <taxon>Euteleostomi</taxon>
        <taxon>Mammalia</taxon>
        <taxon>Eutheria</taxon>
        <taxon>Euarchontoglires</taxon>
        <taxon>Glires</taxon>
        <taxon>Rodentia</taxon>
        <taxon>Myomorpha</taxon>
        <taxon>Muroidea</taxon>
        <taxon>Muridae</taxon>
        <taxon>Murinae</taxon>
        <taxon>Mus</taxon>
        <taxon>Mus</taxon>
    </lineage>
</organism>
<comment type="function">
    <text evidence="1">This protein is a component of the heterogeneous nuclear ribonucleoprotein (hnRNP) complexes which provide the substrate for the processing events that pre-mRNAs undergo before becoming functional, translatable mRNAs in the cytoplasm. Binds poly(RG) (By similarity).</text>
</comment>
<comment type="subunit">
    <text evidence="3">Component of a ribonucleoprotein complex containing mRNAs and RNA-binding proteins including DDX5, HNRNPH2 and SRSF1 as well as splicing regulator ARVCF. Interacts with TXNL4/DIM1.</text>
</comment>
<comment type="subcellular location">
    <subcellularLocation>
        <location evidence="3">Nucleus</location>
        <location evidence="3">Nucleoplasm</location>
    </subcellularLocation>
</comment>
<accession>P70333</accession>
<accession>Q3THV9</accession>
<sequence>MMLSTEGREGFVVKVRGLPWSCSAEEVMRFFSDCKIQNGTSGVRFIYTREGRPSGEAFVELESEDEVKLALKKDRETMGHRYVEVFKSNSVEMDWVLKHTGPNSPDTANDGFVRLRGLPFGCSKEEIVQFFSGLEIVPNGMTLPVDFQGRSTGEAFVQFASQEIAEKALKKHKERIGHRYIEIFKSSRAEVRTHYDPPRKLMTMQRPGPYDRPGAGRGYNSIGRGAGFERMRRGAYGGGYGGYDDYGGYNDGYGFGSDRFGRDLNYCFSGMSDHRYGDGGSSFQSTTGHCVHMRGLPYRATENDIYNFFSPLNPMRVHIEIGPDGRVTGEADVEFATHEDAVAAMAKDKANMQHRYVELFLNSTAGTSGGAYDHSYVELFLNSTAGASGGAYGSQMMGGMGLSNQSSYGGPASQQLSGGYGGGYGGQSSMSGYDQVLQENSSDYQSNLA</sequence>
<reference key="1">
    <citation type="journal article" date="1995" name="Mamm. Genome">
        <title>Sixty-nine kilobases of contiguous human genomic sequence containing the alpha-galactosidase A and Bruton's tyrosine kinase loci.</title>
        <authorList>
            <person name="Oeltjen J.C."/>
            <person name="Liu X."/>
            <person name="Lu J."/>
            <person name="Allen R.C."/>
            <person name="Muzny D.M."/>
            <person name="Belmont J.W."/>
            <person name="Gibbs R.A."/>
        </authorList>
    </citation>
    <scope>NUCLEOTIDE SEQUENCE [GENOMIC DNA]</scope>
    <source>
        <strain>C129</strain>
    </source>
</reference>
<reference key="2">
    <citation type="journal article" date="2005" name="Science">
        <title>The transcriptional landscape of the mammalian genome.</title>
        <authorList>
            <person name="Carninci P."/>
            <person name="Kasukawa T."/>
            <person name="Katayama S."/>
            <person name="Gough J."/>
            <person name="Frith M.C."/>
            <person name="Maeda N."/>
            <person name="Oyama R."/>
            <person name="Ravasi T."/>
            <person name="Lenhard B."/>
            <person name="Wells C."/>
            <person name="Kodzius R."/>
            <person name="Shimokawa K."/>
            <person name="Bajic V.B."/>
            <person name="Brenner S.E."/>
            <person name="Batalov S."/>
            <person name="Forrest A.R."/>
            <person name="Zavolan M."/>
            <person name="Davis M.J."/>
            <person name="Wilming L.G."/>
            <person name="Aidinis V."/>
            <person name="Allen J.E."/>
            <person name="Ambesi-Impiombato A."/>
            <person name="Apweiler R."/>
            <person name="Aturaliya R.N."/>
            <person name="Bailey T.L."/>
            <person name="Bansal M."/>
            <person name="Baxter L."/>
            <person name="Beisel K.W."/>
            <person name="Bersano T."/>
            <person name="Bono H."/>
            <person name="Chalk A.M."/>
            <person name="Chiu K.P."/>
            <person name="Choudhary V."/>
            <person name="Christoffels A."/>
            <person name="Clutterbuck D.R."/>
            <person name="Crowe M.L."/>
            <person name="Dalla E."/>
            <person name="Dalrymple B.P."/>
            <person name="de Bono B."/>
            <person name="Della Gatta G."/>
            <person name="di Bernardo D."/>
            <person name="Down T."/>
            <person name="Engstrom P."/>
            <person name="Fagiolini M."/>
            <person name="Faulkner G."/>
            <person name="Fletcher C.F."/>
            <person name="Fukushima T."/>
            <person name="Furuno M."/>
            <person name="Futaki S."/>
            <person name="Gariboldi M."/>
            <person name="Georgii-Hemming P."/>
            <person name="Gingeras T.R."/>
            <person name="Gojobori T."/>
            <person name="Green R.E."/>
            <person name="Gustincich S."/>
            <person name="Harbers M."/>
            <person name="Hayashi Y."/>
            <person name="Hensch T.K."/>
            <person name="Hirokawa N."/>
            <person name="Hill D."/>
            <person name="Huminiecki L."/>
            <person name="Iacono M."/>
            <person name="Ikeo K."/>
            <person name="Iwama A."/>
            <person name="Ishikawa T."/>
            <person name="Jakt M."/>
            <person name="Kanapin A."/>
            <person name="Katoh M."/>
            <person name="Kawasawa Y."/>
            <person name="Kelso J."/>
            <person name="Kitamura H."/>
            <person name="Kitano H."/>
            <person name="Kollias G."/>
            <person name="Krishnan S.P."/>
            <person name="Kruger A."/>
            <person name="Kummerfeld S.K."/>
            <person name="Kurochkin I.V."/>
            <person name="Lareau L.F."/>
            <person name="Lazarevic D."/>
            <person name="Lipovich L."/>
            <person name="Liu J."/>
            <person name="Liuni S."/>
            <person name="McWilliam S."/>
            <person name="Madan Babu M."/>
            <person name="Madera M."/>
            <person name="Marchionni L."/>
            <person name="Matsuda H."/>
            <person name="Matsuzawa S."/>
            <person name="Miki H."/>
            <person name="Mignone F."/>
            <person name="Miyake S."/>
            <person name="Morris K."/>
            <person name="Mottagui-Tabar S."/>
            <person name="Mulder N."/>
            <person name="Nakano N."/>
            <person name="Nakauchi H."/>
            <person name="Ng P."/>
            <person name="Nilsson R."/>
            <person name="Nishiguchi S."/>
            <person name="Nishikawa S."/>
            <person name="Nori F."/>
            <person name="Ohara O."/>
            <person name="Okazaki Y."/>
            <person name="Orlando V."/>
            <person name="Pang K.C."/>
            <person name="Pavan W.J."/>
            <person name="Pavesi G."/>
            <person name="Pesole G."/>
            <person name="Petrovsky N."/>
            <person name="Piazza S."/>
            <person name="Reed J."/>
            <person name="Reid J.F."/>
            <person name="Ring B.Z."/>
            <person name="Ringwald M."/>
            <person name="Rost B."/>
            <person name="Ruan Y."/>
            <person name="Salzberg S.L."/>
            <person name="Sandelin A."/>
            <person name="Schneider C."/>
            <person name="Schoenbach C."/>
            <person name="Sekiguchi K."/>
            <person name="Semple C.A."/>
            <person name="Seno S."/>
            <person name="Sessa L."/>
            <person name="Sheng Y."/>
            <person name="Shibata Y."/>
            <person name="Shimada H."/>
            <person name="Shimada K."/>
            <person name="Silva D."/>
            <person name="Sinclair B."/>
            <person name="Sperling S."/>
            <person name="Stupka E."/>
            <person name="Sugiura K."/>
            <person name="Sultana R."/>
            <person name="Takenaka Y."/>
            <person name="Taki K."/>
            <person name="Tammoja K."/>
            <person name="Tan S.L."/>
            <person name="Tang S."/>
            <person name="Taylor M.S."/>
            <person name="Tegner J."/>
            <person name="Teichmann S.A."/>
            <person name="Ueda H.R."/>
            <person name="van Nimwegen E."/>
            <person name="Verardo R."/>
            <person name="Wei C.L."/>
            <person name="Yagi K."/>
            <person name="Yamanishi H."/>
            <person name="Zabarovsky E."/>
            <person name="Zhu S."/>
            <person name="Zimmer A."/>
            <person name="Hide W."/>
            <person name="Bult C."/>
            <person name="Grimmond S.M."/>
            <person name="Teasdale R.D."/>
            <person name="Liu E.T."/>
            <person name="Brusic V."/>
            <person name="Quackenbush J."/>
            <person name="Wahlestedt C."/>
            <person name="Mattick J.S."/>
            <person name="Hume D.A."/>
            <person name="Kai C."/>
            <person name="Sasaki D."/>
            <person name="Tomaru Y."/>
            <person name="Fukuda S."/>
            <person name="Kanamori-Katayama M."/>
            <person name="Suzuki M."/>
            <person name="Aoki J."/>
            <person name="Arakawa T."/>
            <person name="Iida J."/>
            <person name="Imamura K."/>
            <person name="Itoh M."/>
            <person name="Kato T."/>
            <person name="Kawaji H."/>
            <person name="Kawagashira N."/>
            <person name="Kawashima T."/>
            <person name="Kojima M."/>
            <person name="Kondo S."/>
            <person name="Konno H."/>
            <person name="Nakano K."/>
            <person name="Ninomiya N."/>
            <person name="Nishio T."/>
            <person name="Okada M."/>
            <person name="Plessy C."/>
            <person name="Shibata K."/>
            <person name="Shiraki T."/>
            <person name="Suzuki S."/>
            <person name="Tagami M."/>
            <person name="Waki K."/>
            <person name="Watahiki A."/>
            <person name="Okamura-Oho Y."/>
            <person name="Suzuki H."/>
            <person name="Kawai J."/>
            <person name="Hayashizaki Y."/>
        </authorList>
    </citation>
    <scope>NUCLEOTIDE SEQUENCE [LARGE SCALE MRNA]</scope>
    <source>
        <strain>BALB/cJ</strain>
        <strain>C57BL/6J</strain>
        <tissue>Kidney</tissue>
        <tissue>Spinal cord</tissue>
    </source>
</reference>
<reference key="3">
    <citation type="journal article" date="2004" name="Genome Res.">
        <title>The status, quality, and expansion of the NIH full-length cDNA project: the Mammalian Gene Collection (MGC).</title>
        <authorList>
            <consortium name="The MGC Project Team"/>
        </authorList>
    </citation>
    <scope>NUCLEOTIDE SEQUENCE [LARGE SCALE MRNA]</scope>
    <source>
        <tissue>Mammary gland</tissue>
    </source>
</reference>
<reference key="4">
    <citation type="journal article" date="2010" name="Cell">
        <title>A tissue-specific atlas of mouse protein phosphorylation and expression.</title>
        <authorList>
            <person name="Huttlin E.L."/>
            <person name="Jedrychowski M.P."/>
            <person name="Elias J.E."/>
            <person name="Goswami T."/>
            <person name="Rad R."/>
            <person name="Beausoleil S.A."/>
            <person name="Villen J."/>
            <person name="Haas W."/>
            <person name="Sowa M.E."/>
            <person name="Gygi S.P."/>
        </authorList>
    </citation>
    <scope>PHOSPHORYLATION [LARGE SCALE ANALYSIS] AT SER-90 AND SER-310</scope>
    <scope>IDENTIFICATION BY MASS SPECTROMETRY [LARGE SCALE ANALYSIS]</scope>
    <source>
        <tissue>Brain</tissue>
        <tissue>Brown adipose tissue</tissue>
        <tissue>Heart</tissue>
        <tissue>Kidney</tissue>
        <tissue>Lung</tissue>
        <tissue>Pancreas</tissue>
        <tissue>Spleen</tissue>
    </source>
</reference>
<reference key="5">
    <citation type="journal article" date="2014" name="Mol. Cell. Proteomics">
        <title>Immunoaffinity enrichment and mass spectrometry analysis of protein methylation.</title>
        <authorList>
            <person name="Guo A."/>
            <person name="Gu H."/>
            <person name="Zhou J."/>
            <person name="Mulhern D."/>
            <person name="Wang Y."/>
            <person name="Lee K.A."/>
            <person name="Yang V."/>
            <person name="Aguiar M."/>
            <person name="Kornhauser J."/>
            <person name="Jia X."/>
            <person name="Ren J."/>
            <person name="Beausoleil S.A."/>
            <person name="Silva J.C."/>
            <person name="Vemulapalli V."/>
            <person name="Bedford M.T."/>
            <person name="Comb M.J."/>
        </authorList>
    </citation>
    <scope>METHYLATION [LARGE SCALE ANALYSIS] AT ARG-233</scope>
    <scope>IDENTIFICATION BY MASS SPECTROMETRY [LARGE SCALE ANALYSIS]</scope>
    <source>
        <tissue>Brain</tissue>
        <tissue>Embryo</tissue>
    </source>
</reference>
<dbReference type="EMBL" id="U58105">
    <property type="protein sequence ID" value="AAB47243.1"/>
    <property type="molecule type" value="Genomic_DNA"/>
</dbReference>
<dbReference type="EMBL" id="AK077716">
    <property type="protein sequence ID" value="BAC36976.1"/>
    <property type="molecule type" value="mRNA"/>
</dbReference>
<dbReference type="EMBL" id="AK164115">
    <property type="protein sequence ID" value="BAE37634.1"/>
    <property type="molecule type" value="mRNA"/>
</dbReference>
<dbReference type="EMBL" id="AK168116">
    <property type="protein sequence ID" value="BAE40087.1"/>
    <property type="molecule type" value="mRNA"/>
</dbReference>
<dbReference type="EMBL" id="AK169104">
    <property type="protein sequence ID" value="BAE40886.1"/>
    <property type="molecule type" value="mRNA"/>
</dbReference>
<dbReference type="EMBL" id="BC005461">
    <property type="protein sequence ID" value="AAH05461.1"/>
    <property type="molecule type" value="mRNA"/>
</dbReference>
<dbReference type="CCDS" id="CCDS30397.1"/>
<dbReference type="RefSeq" id="NP_001300645.1">
    <property type="nucleotide sequence ID" value="NM_001313716.1"/>
</dbReference>
<dbReference type="RefSeq" id="NP_001300646.1">
    <property type="nucleotide sequence ID" value="NM_001313717.1"/>
</dbReference>
<dbReference type="RefSeq" id="NP_063921.1">
    <property type="nucleotide sequence ID" value="NM_019868.4"/>
</dbReference>
<dbReference type="SMR" id="P70333"/>
<dbReference type="BioGRID" id="207865">
    <property type="interactions" value="38"/>
</dbReference>
<dbReference type="FunCoup" id="P70333">
    <property type="interactions" value="3648"/>
</dbReference>
<dbReference type="IntAct" id="P70333">
    <property type="interactions" value="9"/>
</dbReference>
<dbReference type="MINT" id="P70333"/>
<dbReference type="STRING" id="10090.ENSMUSP00000108828"/>
<dbReference type="GlyGen" id="P70333">
    <property type="glycosylation" value="2 sites, 1 N-linked glycan (1 site), 1 O-linked glycan (1 site)"/>
</dbReference>
<dbReference type="iPTMnet" id="P70333"/>
<dbReference type="PhosphoSitePlus" id="P70333"/>
<dbReference type="SwissPalm" id="P70333"/>
<dbReference type="jPOST" id="P70333"/>
<dbReference type="PaxDb" id="10090-ENSMUSP00000108828"/>
<dbReference type="PeptideAtlas" id="P70333"/>
<dbReference type="ProteomicsDB" id="273160"/>
<dbReference type="Pumba" id="P70333"/>
<dbReference type="Antibodypedia" id="343">
    <property type="antibodies" value="137 antibodies from 24 providers"/>
</dbReference>
<dbReference type="DNASU" id="56258"/>
<dbReference type="Ensembl" id="ENSMUST00000050331.13">
    <property type="protein sequence ID" value="ENSMUSP00000108827.2"/>
    <property type="gene ID" value="ENSMUSG00000045427.14"/>
</dbReference>
<dbReference type="Ensembl" id="ENSMUST00000059297.6">
    <property type="protein sequence ID" value="ENSMUSP00000050838.6"/>
    <property type="gene ID" value="ENSMUSG00000045427.14"/>
</dbReference>
<dbReference type="Ensembl" id="ENSMUST00000074950.11">
    <property type="protein sequence ID" value="ENSMUSP00000074483.5"/>
    <property type="gene ID" value="ENSMUSG00000045427.14"/>
</dbReference>
<dbReference type="Ensembl" id="ENSMUST00000113202.8">
    <property type="protein sequence ID" value="ENSMUSP00000108828.2"/>
    <property type="gene ID" value="ENSMUSG00000045427.14"/>
</dbReference>
<dbReference type="Ensembl" id="ENSMUST00000113203.2">
    <property type="protein sequence ID" value="ENSMUSP00000108829.2"/>
    <property type="gene ID" value="ENSMUSG00000045427.14"/>
</dbReference>
<dbReference type="GeneID" id="56258"/>
<dbReference type="KEGG" id="mmu:56258"/>
<dbReference type="UCSC" id="uc009ugh.1">
    <property type="organism name" value="mouse"/>
</dbReference>
<dbReference type="AGR" id="MGI:1201779"/>
<dbReference type="CTD" id="3188"/>
<dbReference type="MGI" id="MGI:1201779">
    <property type="gene designation" value="Hnrnph2"/>
</dbReference>
<dbReference type="VEuPathDB" id="HostDB:ENSMUSG00000045427"/>
<dbReference type="eggNOG" id="KOG4211">
    <property type="taxonomic scope" value="Eukaryota"/>
</dbReference>
<dbReference type="GeneTree" id="ENSGT00940000153503"/>
<dbReference type="HOGENOM" id="CLU_032003_1_0_1"/>
<dbReference type="InParanoid" id="P70333"/>
<dbReference type="OMA" id="YSCTEDQ"/>
<dbReference type="OrthoDB" id="431068at2759"/>
<dbReference type="PhylomeDB" id="P70333"/>
<dbReference type="TreeFam" id="TF316157"/>
<dbReference type="Reactome" id="R-MMU-72163">
    <property type="pathway name" value="mRNA Splicing - Major Pathway"/>
</dbReference>
<dbReference type="Reactome" id="R-MMU-72203">
    <property type="pathway name" value="Processing of Capped Intron-Containing Pre-mRNA"/>
</dbReference>
<dbReference type="BioGRID-ORCS" id="56258">
    <property type="hits" value="3 hits in 79 CRISPR screens"/>
</dbReference>
<dbReference type="ChiTaRS" id="Hnrnph2">
    <property type="organism name" value="mouse"/>
</dbReference>
<dbReference type="PRO" id="PR:P70333"/>
<dbReference type="Proteomes" id="UP000000589">
    <property type="component" value="Chromosome X"/>
</dbReference>
<dbReference type="RNAct" id="P70333">
    <property type="molecule type" value="protein"/>
</dbReference>
<dbReference type="Bgee" id="ENSMUSG00000045427">
    <property type="expression patterns" value="Expressed in ventricular zone and 72 other cell types or tissues"/>
</dbReference>
<dbReference type="GO" id="GO:0005829">
    <property type="term" value="C:cytosol"/>
    <property type="evidence" value="ECO:0007669"/>
    <property type="project" value="Ensembl"/>
</dbReference>
<dbReference type="GO" id="GO:0005654">
    <property type="term" value="C:nucleoplasm"/>
    <property type="evidence" value="ECO:0000250"/>
    <property type="project" value="UniProtKB"/>
</dbReference>
<dbReference type="GO" id="GO:0014069">
    <property type="term" value="C:postsynaptic density"/>
    <property type="evidence" value="ECO:0007669"/>
    <property type="project" value="Ensembl"/>
</dbReference>
<dbReference type="GO" id="GO:1990904">
    <property type="term" value="C:ribonucleoprotein complex"/>
    <property type="evidence" value="ECO:0000266"/>
    <property type="project" value="MGI"/>
</dbReference>
<dbReference type="GO" id="GO:0003723">
    <property type="term" value="F:RNA binding"/>
    <property type="evidence" value="ECO:0007669"/>
    <property type="project" value="UniProtKB-KW"/>
</dbReference>
<dbReference type="CDD" id="cd12729">
    <property type="entry name" value="RRM1_hnRNPH_hnRNPH2_hnRNPF"/>
    <property type="match status" value="1"/>
</dbReference>
<dbReference type="CDD" id="cd12731">
    <property type="entry name" value="RRM2_hnRNPH_hnRNPH2_hnRNPF"/>
    <property type="match status" value="1"/>
</dbReference>
<dbReference type="CDD" id="cd12734">
    <property type="entry name" value="RRM3_hnRNPH_hnRNPH2_hnRNPF"/>
    <property type="match status" value="1"/>
</dbReference>
<dbReference type="FunFam" id="3.30.70.330:FF:000071">
    <property type="entry name" value="heterogeneous nuclear ribonucleoprotein H isoform X1"/>
    <property type="match status" value="1"/>
</dbReference>
<dbReference type="FunFam" id="3.30.70.330:FF:000075">
    <property type="entry name" value="Heterogeneous nuclear ribonucleoprotein H1 (H)"/>
    <property type="match status" value="1"/>
</dbReference>
<dbReference type="FunFam" id="3.30.70.330:FF:000031">
    <property type="entry name" value="Heterogeneous nuclear ribonucleoprotein h3 isoform"/>
    <property type="match status" value="1"/>
</dbReference>
<dbReference type="Gene3D" id="3.30.70.330">
    <property type="match status" value="3"/>
</dbReference>
<dbReference type="InterPro" id="IPR050666">
    <property type="entry name" value="ESRP"/>
</dbReference>
<dbReference type="InterPro" id="IPR012677">
    <property type="entry name" value="Nucleotide-bd_a/b_plait_sf"/>
</dbReference>
<dbReference type="InterPro" id="IPR035979">
    <property type="entry name" value="RBD_domain_sf"/>
</dbReference>
<dbReference type="InterPro" id="IPR000504">
    <property type="entry name" value="RRM_dom"/>
</dbReference>
<dbReference type="InterPro" id="IPR012996">
    <property type="entry name" value="Znf_CHHC"/>
</dbReference>
<dbReference type="PANTHER" id="PTHR13976">
    <property type="entry name" value="HETEROGENEOUS NUCLEAR RIBONUCLEOPROTEIN-RELATED"/>
    <property type="match status" value="1"/>
</dbReference>
<dbReference type="Pfam" id="PF00076">
    <property type="entry name" value="RRM_1"/>
    <property type="match status" value="3"/>
</dbReference>
<dbReference type="Pfam" id="PF08080">
    <property type="entry name" value="zf-RNPHF"/>
    <property type="match status" value="1"/>
</dbReference>
<dbReference type="SMART" id="SM00360">
    <property type="entry name" value="RRM"/>
    <property type="match status" value="3"/>
</dbReference>
<dbReference type="SUPFAM" id="SSF54928">
    <property type="entry name" value="RNA-binding domain, RBD"/>
    <property type="match status" value="3"/>
</dbReference>
<dbReference type="PROSITE" id="PS50102">
    <property type="entry name" value="RRM"/>
    <property type="match status" value="3"/>
</dbReference>
<evidence type="ECO:0000250" key="1"/>
<evidence type="ECO:0000250" key="2">
    <source>
        <dbReference type="UniProtKB" id="P31943"/>
    </source>
</evidence>
<evidence type="ECO:0000250" key="3">
    <source>
        <dbReference type="UniProtKB" id="P55795"/>
    </source>
</evidence>
<evidence type="ECO:0000255" key="4">
    <source>
        <dbReference type="PROSITE-ProRule" id="PRU00176"/>
    </source>
</evidence>
<evidence type="ECO:0007744" key="5">
    <source>
    </source>
</evidence>
<evidence type="ECO:0007744" key="6">
    <source>
    </source>
</evidence>
<name>HNRH2_MOUSE</name>
<proteinExistence type="evidence at protein level"/>